<name>RS4_AROAE</name>
<comment type="function">
    <text evidence="1">One of the primary rRNA binding proteins, it binds directly to 16S rRNA where it nucleates assembly of the body of the 30S subunit.</text>
</comment>
<comment type="function">
    <text evidence="1">With S5 and S12 plays an important role in translational accuracy.</text>
</comment>
<comment type="subunit">
    <text evidence="1">Part of the 30S ribosomal subunit. Contacts protein S5. The interaction surface between S4 and S5 is involved in control of translational fidelity.</text>
</comment>
<comment type="similarity">
    <text evidence="1">Belongs to the universal ribosomal protein uS4 family.</text>
</comment>
<protein>
    <recommendedName>
        <fullName evidence="1">Small ribosomal subunit protein uS4</fullName>
    </recommendedName>
    <alternativeName>
        <fullName evidence="2">30S ribosomal protein S4</fullName>
    </alternativeName>
</protein>
<sequence length="209" mass="23609">MARNLDPKCRQCRREGEKLFLKAEKCFTDKCAIERRAYAPGQHGQRSGQRMSGYGVQLREKQKIRRLYGVLEAQFRKVYAEAERRRGQTGENLLQLLEGRLDSVVYRMGFGGSRAESRQLVRHNGILVNGKRVNIPSYVVRPGDVVELTEGSRGQLRVKAALEAAASRGFPEWLDVDAKAGKGTFKAYPQRAELPPTINEGLVVELYSR</sequence>
<dbReference type="EMBL" id="CR555306">
    <property type="protein sequence ID" value="CAI08306.1"/>
    <property type="molecule type" value="Genomic_DNA"/>
</dbReference>
<dbReference type="RefSeq" id="WP_011237996.1">
    <property type="nucleotide sequence ID" value="NC_006513.1"/>
</dbReference>
<dbReference type="SMR" id="Q5P308"/>
<dbReference type="STRING" id="76114.ebA3852"/>
<dbReference type="KEGG" id="eba:ebA3852"/>
<dbReference type="eggNOG" id="COG0522">
    <property type="taxonomic scope" value="Bacteria"/>
</dbReference>
<dbReference type="HOGENOM" id="CLU_092403_0_2_4"/>
<dbReference type="OrthoDB" id="9803672at2"/>
<dbReference type="Proteomes" id="UP000006552">
    <property type="component" value="Chromosome"/>
</dbReference>
<dbReference type="GO" id="GO:0015935">
    <property type="term" value="C:small ribosomal subunit"/>
    <property type="evidence" value="ECO:0007669"/>
    <property type="project" value="InterPro"/>
</dbReference>
<dbReference type="GO" id="GO:0019843">
    <property type="term" value="F:rRNA binding"/>
    <property type="evidence" value="ECO:0007669"/>
    <property type="project" value="UniProtKB-UniRule"/>
</dbReference>
<dbReference type="GO" id="GO:0003735">
    <property type="term" value="F:structural constituent of ribosome"/>
    <property type="evidence" value="ECO:0007669"/>
    <property type="project" value="InterPro"/>
</dbReference>
<dbReference type="GO" id="GO:0042274">
    <property type="term" value="P:ribosomal small subunit biogenesis"/>
    <property type="evidence" value="ECO:0007669"/>
    <property type="project" value="TreeGrafter"/>
</dbReference>
<dbReference type="GO" id="GO:0006412">
    <property type="term" value="P:translation"/>
    <property type="evidence" value="ECO:0007669"/>
    <property type="project" value="UniProtKB-UniRule"/>
</dbReference>
<dbReference type="CDD" id="cd00165">
    <property type="entry name" value="S4"/>
    <property type="match status" value="1"/>
</dbReference>
<dbReference type="FunFam" id="1.10.1050.10:FF:000001">
    <property type="entry name" value="30S ribosomal protein S4"/>
    <property type="match status" value="1"/>
</dbReference>
<dbReference type="FunFam" id="3.10.290.10:FF:000001">
    <property type="entry name" value="30S ribosomal protein S4"/>
    <property type="match status" value="1"/>
</dbReference>
<dbReference type="Gene3D" id="1.10.1050.10">
    <property type="entry name" value="Ribosomal Protein S4 Delta 41, Chain A, domain 1"/>
    <property type="match status" value="1"/>
</dbReference>
<dbReference type="Gene3D" id="3.10.290.10">
    <property type="entry name" value="RNA-binding S4 domain"/>
    <property type="match status" value="1"/>
</dbReference>
<dbReference type="HAMAP" id="MF_01306_B">
    <property type="entry name" value="Ribosomal_uS4_B"/>
    <property type="match status" value="1"/>
</dbReference>
<dbReference type="InterPro" id="IPR022801">
    <property type="entry name" value="Ribosomal_uS4"/>
</dbReference>
<dbReference type="InterPro" id="IPR005709">
    <property type="entry name" value="Ribosomal_uS4_bac-type"/>
</dbReference>
<dbReference type="InterPro" id="IPR018079">
    <property type="entry name" value="Ribosomal_uS4_CS"/>
</dbReference>
<dbReference type="InterPro" id="IPR001912">
    <property type="entry name" value="Ribosomal_uS4_N"/>
</dbReference>
<dbReference type="InterPro" id="IPR002942">
    <property type="entry name" value="S4_RNA-bd"/>
</dbReference>
<dbReference type="InterPro" id="IPR036986">
    <property type="entry name" value="S4_RNA-bd_sf"/>
</dbReference>
<dbReference type="NCBIfam" id="NF003717">
    <property type="entry name" value="PRK05327.1"/>
    <property type="match status" value="1"/>
</dbReference>
<dbReference type="NCBIfam" id="TIGR01017">
    <property type="entry name" value="rpsD_bact"/>
    <property type="match status" value="1"/>
</dbReference>
<dbReference type="PANTHER" id="PTHR11831">
    <property type="entry name" value="30S 40S RIBOSOMAL PROTEIN"/>
    <property type="match status" value="1"/>
</dbReference>
<dbReference type="PANTHER" id="PTHR11831:SF4">
    <property type="entry name" value="SMALL RIBOSOMAL SUBUNIT PROTEIN US4M"/>
    <property type="match status" value="1"/>
</dbReference>
<dbReference type="Pfam" id="PF00163">
    <property type="entry name" value="Ribosomal_S4"/>
    <property type="match status" value="1"/>
</dbReference>
<dbReference type="Pfam" id="PF01479">
    <property type="entry name" value="S4"/>
    <property type="match status" value="1"/>
</dbReference>
<dbReference type="SMART" id="SM01390">
    <property type="entry name" value="Ribosomal_S4"/>
    <property type="match status" value="1"/>
</dbReference>
<dbReference type="SMART" id="SM00363">
    <property type="entry name" value="S4"/>
    <property type="match status" value="1"/>
</dbReference>
<dbReference type="SUPFAM" id="SSF55174">
    <property type="entry name" value="Alpha-L RNA-binding motif"/>
    <property type="match status" value="1"/>
</dbReference>
<dbReference type="PROSITE" id="PS00632">
    <property type="entry name" value="RIBOSOMAL_S4"/>
    <property type="match status" value="1"/>
</dbReference>
<dbReference type="PROSITE" id="PS50889">
    <property type="entry name" value="S4"/>
    <property type="match status" value="1"/>
</dbReference>
<gene>
    <name evidence="1" type="primary">rpsD</name>
    <name type="ordered locus">AZOSEA21810</name>
    <name type="ORF">ebA3852</name>
</gene>
<accession>Q5P308</accession>
<organism>
    <name type="scientific">Aromatoleum aromaticum (strain DSM 19018 / LMG 30748 / EbN1)</name>
    <name type="common">Azoarcus sp. (strain EbN1)</name>
    <dbReference type="NCBI Taxonomy" id="76114"/>
    <lineage>
        <taxon>Bacteria</taxon>
        <taxon>Pseudomonadati</taxon>
        <taxon>Pseudomonadota</taxon>
        <taxon>Betaproteobacteria</taxon>
        <taxon>Rhodocyclales</taxon>
        <taxon>Rhodocyclaceae</taxon>
        <taxon>Aromatoleum</taxon>
    </lineage>
</organism>
<evidence type="ECO:0000255" key="1">
    <source>
        <dbReference type="HAMAP-Rule" id="MF_01306"/>
    </source>
</evidence>
<evidence type="ECO:0000305" key="2"/>
<keyword id="KW-1185">Reference proteome</keyword>
<keyword id="KW-0687">Ribonucleoprotein</keyword>
<keyword id="KW-0689">Ribosomal protein</keyword>
<keyword id="KW-0694">RNA-binding</keyword>
<keyword id="KW-0699">rRNA-binding</keyword>
<proteinExistence type="inferred from homology"/>
<feature type="chain" id="PRO_0000228875" description="Small ribosomal subunit protein uS4">
    <location>
        <begin position="1"/>
        <end position="209"/>
    </location>
</feature>
<feature type="domain" description="S4 RNA-binding" evidence="1">
    <location>
        <begin position="99"/>
        <end position="164"/>
    </location>
</feature>
<reference key="1">
    <citation type="journal article" date="2005" name="Arch. Microbiol.">
        <title>The genome sequence of an anaerobic aromatic-degrading denitrifying bacterium, strain EbN1.</title>
        <authorList>
            <person name="Rabus R."/>
            <person name="Kube M."/>
            <person name="Heider J."/>
            <person name="Beck A."/>
            <person name="Heitmann K."/>
            <person name="Widdel F."/>
            <person name="Reinhardt R."/>
        </authorList>
    </citation>
    <scope>NUCLEOTIDE SEQUENCE [LARGE SCALE GENOMIC DNA]</scope>
    <source>
        <strain>DSM 19018 / LMG 30748 / EbN1</strain>
    </source>
</reference>